<proteinExistence type="inferred from homology"/>
<keyword id="KW-0068">Autocatalytic cleavage</keyword>
<keyword id="KW-0963">Cytoplasm</keyword>
<keyword id="KW-0210">Decarboxylase</keyword>
<keyword id="KW-0456">Lyase</keyword>
<keyword id="KW-0566">Pantothenate biosynthesis</keyword>
<keyword id="KW-0670">Pyruvate</keyword>
<keyword id="KW-0704">Schiff base</keyword>
<keyword id="KW-0865">Zymogen</keyword>
<reference key="1">
    <citation type="submission" date="2008-06" db="EMBL/GenBank/DDBJ databases">
        <title>Complete sequence of chromosome of Prosthecochloris aestuarii DSM 271.</title>
        <authorList>
            <consortium name="US DOE Joint Genome Institute"/>
            <person name="Lucas S."/>
            <person name="Copeland A."/>
            <person name="Lapidus A."/>
            <person name="Glavina del Rio T."/>
            <person name="Dalin E."/>
            <person name="Tice H."/>
            <person name="Bruce D."/>
            <person name="Goodwin L."/>
            <person name="Pitluck S."/>
            <person name="Schmutz J."/>
            <person name="Larimer F."/>
            <person name="Land M."/>
            <person name="Hauser L."/>
            <person name="Kyrpides N."/>
            <person name="Anderson I."/>
            <person name="Liu Z."/>
            <person name="Li T."/>
            <person name="Zhao F."/>
            <person name="Overmann J."/>
            <person name="Bryant D.A."/>
            <person name="Richardson P."/>
        </authorList>
    </citation>
    <scope>NUCLEOTIDE SEQUENCE [LARGE SCALE GENOMIC DNA]</scope>
    <source>
        <strain>DSM 271 / SK 413</strain>
    </source>
</reference>
<comment type="function">
    <text evidence="1">Catalyzes the pyruvoyl-dependent decarboxylation of aspartate to produce beta-alanine.</text>
</comment>
<comment type="catalytic activity">
    <reaction evidence="1">
        <text>L-aspartate + H(+) = beta-alanine + CO2</text>
        <dbReference type="Rhea" id="RHEA:19497"/>
        <dbReference type="ChEBI" id="CHEBI:15378"/>
        <dbReference type="ChEBI" id="CHEBI:16526"/>
        <dbReference type="ChEBI" id="CHEBI:29991"/>
        <dbReference type="ChEBI" id="CHEBI:57966"/>
        <dbReference type="EC" id="4.1.1.11"/>
    </reaction>
</comment>
<comment type="cofactor">
    <cofactor evidence="1">
        <name>pyruvate</name>
        <dbReference type="ChEBI" id="CHEBI:15361"/>
    </cofactor>
    <text evidence="1">Binds 1 pyruvoyl group covalently per subunit.</text>
</comment>
<comment type="pathway">
    <text evidence="1">Cofactor biosynthesis; (R)-pantothenate biosynthesis; beta-alanine from L-aspartate: step 1/1.</text>
</comment>
<comment type="subunit">
    <text evidence="1">Heterooctamer of four alpha and four beta subunits.</text>
</comment>
<comment type="subcellular location">
    <subcellularLocation>
        <location evidence="1">Cytoplasm</location>
    </subcellularLocation>
</comment>
<comment type="PTM">
    <text evidence="1">Is synthesized initially as an inactive proenzyme, which is activated by self-cleavage at a specific serine bond to produce a beta-subunit with a hydroxyl group at its C-terminus and an alpha-subunit with a pyruvoyl group at its N-terminus.</text>
</comment>
<comment type="similarity">
    <text evidence="1">Belongs to the PanD family.</text>
</comment>
<evidence type="ECO:0000255" key="1">
    <source>
        <dbReference type="HAMAP-Rule" id="MF_00446"/>
    </source>
</evidence>
<organism>
    <name type="scientific">Prosthecochloris aestuarii (strain DSM 271 / SK 413)</name>
    <dbReference type="NCBI Taxonomy" id="290512"/>
    <lineage>
        <taxon>Bacteria</taxon>
        <taxon>Pseudomonadati</taxon>
        <taxon>Chlorobiota</taxon>
        <taxon>Chlorobiia</taxon>
        <taxon>Chlorobiales</taxon>
        <taxon>Chlorobiaceae</taxon>
        <taxon>Prosthecochloris</taxon>
    </lineage>
</organism>
<name>PAND_PROA2</name>
<dbReference type="EC" id="4.1.1.11" evidence="1"/>
<dbReference type="EMBL" id="CP001108">
    <property type="protein sequence ID" value="ACF45436.1"/>
    <property type="molecule type" value="Genomic_DNA"/>
</dbReference>
<dbReference type="RefSeq" id="WP_012504973.1">
    <property type="nucleotide sequence ID" value="NC_011059.1"/>
</dbReference>
<dbReference type="SMR" id="B4S4T8"/>
<dbReference type="STRING" id="290512.Paes_0379"/>
<dbReference type="KEGG" id="paa:Paes_0379"/>
<dbReference type="eggNOG" id="COG0853">
    <property type="taxonomic scope" value="Bacteria"/>
</dbReference>
<dbReference type="HOGENOM" id="CLU_115305_2_0_10"/>
<dbReference type="UniPathway" id="UPA00028">
    <property type="reaction ID" value="UER00002"/>
</dbReference>
<dbReference type="Proteomes" id="UP000002725">
    <property type="component" value="Chromosome"/>
</dbReference>
<dbReference type="GO" id="GO:0005829">
    <property type="term" value="C:cytosol"/>
    <property type="evidence" value="ECO:0007669"/>
    <property type="project" value="TreeGrafter"/>
</dbReference>
<dbReference type="GO" id="GO:0004068">
    <property type="term" value="F:aspartate 1-decarboxylase activity"/>
    <property type="evidence" value="ECO:0007669"/>
    <property type="project" value="UniProtKB-UniRule"/>
</dbReference>
<dbReference type="GO" id="GO:0006523">
    <property type="term" value="P:alanine biosynthetic process"/>
    <property type="evidence" value="ECO:0007669"/>
    <property type="project" value="InterPro"/>
</dbReference>
<dbReference type="GO" id="GO:0015940">
    <property type="term" value="P:pantothenate biosynthetic process"/>
    <property type="evidence" value="ECO:0007669"/>
    <property type="project" value="UniProtKB-UniRule"/>
</dbReference>
<dbReference type="CDD" id="cd06919">
    <property type="entry name" value="Asp_decarbox"/>
    <property type="match status" value="1"/>
</dbReference>
<dbReference type="Gene3D" id="2.40.40.20">
    <property type="match status" value="1"/>
</dbReference>
<dbReference type="HAMAP" id="MF_00446">
    <property type="entry name" value="PanD"/>
    <property type="match status" value="1"/>
</dbReference>
<dbReference type="InterPro" id="IPR009010">
    <property type="entry name" value="Asp_de-COase-like_dom_sf"/>
</dbReference>
<dbReference type="InterPro" id="IPR003190">
    <property type="entry name" value="Asp_decarbox"/>
</dbReference>
<dbReference type="NCBIfam" id="TIGR00223">
    <property type="entry name" value="panD"/>
    <property type="match status" value="1"/>
</dbReference>
<dbReference type="PANTHER" id="PTHR21012">
    <property type="entry name" value="ASPARTATE 1-DECARBOXYLASE"/>
    <property type="match status" value="1"/>
</dbReference>
<dbReference type="PANTHER" id="PTHR21012:SF0">
    <property type="entry name" value="ASPARTATE 1-DECARBOXYLASE"/>
    <property type="match status" value="1"/>
</dbReference>
<dbReference type="Pfam" id="PF02261">
    <property type="entry name" value="Asp_decarbox"/>
    <property type="match status" value="1"/>
</dbReference>
<dbReference type="PIRSF" id="PIRSF006246">
    <property type="entry name" value="Asp_decarbox"/>
    <property type="match status" value="1"/>
</dbReference>
<dbReference type="SUPFAM" id="SSF50692">
    <property type="entry name" value="ADC-like"/>
    <property type="match status" value="1"/>
</dbReference>
<protein>
    <recommendedName>
        <fullName evidence="1">Aspartate 1-decarboxylase</fullName>
        <ecNumber evidence="1">4.1.1.11</ecNumber>
    </recommendedName>
    <alternativeName>
        <fullName evidence="1">Aspartate alpha-decarboxylase</fullName>
    </alternativeName>
    <component>
        <recommendedName>
            <fullName evidence="1">Aspartate 1-decarboxylase beta chain</fullName>
        </recommendedName>
    </component>
    <component>
        <recommendedName>
            <fullName evidence="1">Aspartate 1-decarboxylase alpha chain</fullName>
        </recommendedName>
    </component>
</protein>
<feature type="chain" id="PRO_1000124855" description="Aspartate 1-decarboxylase beta chain" evidence="1">
    <location>
        <begin position="1"/>
        <end position="24"/>
    </location>
</feature>
<feature type="chain" id="PRO_1000124856" description="Aspartate 1-decarboxylase alpha chain" evidence="1">
    <location>
        <begin position="25"/>
        <end position="129"/>
    </location>
</feature>
<feature type="active site" description="Schiff-base intermediate with substrate; via pyruvic acid" evidence="1">
    <location>
        <position position="25"/>
    </location>
</feature>
<feature type="active site" description="Proton donor" evidence="1">
    <location>
        <position position="58"/>
    </location>
</feature>
<feature type="binding site" evidence="1">
    <location>
        <position position="57"/>
    </location>
    <ligand>
        <name>substrate</name>
    </ligand>
</feature>
<feature type="binding site" evidence="1">
    <location>
        <begin position="73"/>
        <end position="75"/>
    </location>
    <ligand>
        <name>substrate</name>
    </ligand>
</feature>
<feature type="modified residue" description="Pyruvic acid (Ser)" evidence="1">
    <location>
        <position position="25"/>
    </location>
</feature>
<sequence>MRLHLLKSKIHNAIVTSGDLEYEGSITIDSQLLELADMLPNEKVLCVNNNNGERFETYIIKGKAGSREIQLNGAAARCALPGDEIIIMTFAEIEAEKAKDFKPMILIVDHQNNPKRRHLVGEEDTPLPH</sequence>
<gene>
    <name evidence="1" type="primary">panD</name>
    <name type="ordered locus">Paes_0379</name>
</gene>
<accession>B4S4T8</accession>